<evidence type="ECO:0000255" key="1">
    <source>
        <dbReference type="HAMAP-Rule" id="MF_03141"/>
    </source>
</evidence>
<feature type="chain" id="PRO_0000405050" description="Lissencephaly-1 homolog">
    <location>
        <begin position="1"/>
        <end position="411"/>
    </location>
</feature>
<feature type="domain" description="LisH" evidence="1">
    <location>
        <begin position="9"/>
        <end position="41"/>
    </location>
</feature>
<feature type="repeat" description="WD 1">
    <location>
        <begin position="106"/>
        <end position="147"/>
    </location>
</feature>
<feature type="repeat" description="WD 2">
    <location>
        <begin position="148"/>
        <end position="187"/>
    </location>
</feature>
<feature type="repeat" description="WD 3">
    <location>
        <begin position="191"/>
        <end position="230"/>
    </location>
</feature>
<feature type="repeat" description="WD 4">
    <location>
        <begin position="233"/>
        <end position="272"/>
    </location>
</feature>
<feature type="repeat" description="WD 5">
    <location>
        <begin position="275"/>
        <end position="334"/>
    </location>
</feature>
<feature type="repeat" description="WD 6">
    <location>
        <begin position="337"/>
        <end position="376"/>
    </location>
</feature>
<feature type="repeat" description="WD 7">
    <location>
        <begin position="379"/>
        <end position="411"/>
    </location>
</feature>
<feature type="coiled-coil region" evidence="1">
    <location>
        <begin position="56"/>
        <end position="83"/>
    </location>
</feature>
<sequence length="411" mass="46446">MKMVLSQRQREELNQAIADYLGSNGYADSLETFRKEADLSTEVEKKFGGLLEKKWTSVIRLQKKVMELEAKLTEAEKEVIEGAPTKNKRTPGEWIPRPPEKFSLTGHRASITRVIFHPIFGLMVSASEDATIRIWDFETGEYERSLKGHTDSVQDVAFDAQGKLLASCSADLSIKLWDFQQSYECIKTMHGHDHNVSSVAFVPAGDYVLSASRDRTIKMWEVATGYCVKTYTGHREWVRMVRVHIEGSIFATCSNDQTIRVWLTNSKDCKVELRDHEHTVECIAWAPEAAASAINEAAGADNKKGHHQGPFLASGSRDKTIRIWDVSVGLCLLTLSGHDNWVRGLAFHPGGKYLVSASDDKTIRVWDLRNKRCMKTLYAHQHFCTSIDFHKAHPYVISGSVDQTVKVWECR</sequence>
<comment type="function">
    <text evidence="1">Positively regulates the activity of the minus-end directed microtubule motor protein dynein. May enhance dynein-mediated microtubule sliding by targeting dynein to the microtubule plus end. Required for several dynein- and microtubule-dependent processes.</text>
</comment>
<comment type="subcellular location">
    <subcellularLocation>
        <location evidence="1">Cytoplasm</location>
        <location evidence="1">Cytoskeleton</location>
    </subcellularLocation>
    <subcellularLocation>
        <location evidence="1">Cytoplasm</location>
        <location evidence="1">Cytoskeleton</location>
        <location evidence="1">Microtubule organizing center</location>
        <location evidence="1">Centrosome</location>
    </subcellularLocation>
    <text evidence="1">Localizes to the plus end of microtubules and to the centrosome.</text>
</comment>
<comment type="domain">
    <text evidence="1">Dimerization mediated by the LisH domain may be required to activate dynein.</text>
</comment>
<comment type="similarity">
    <text evidence="1">Belongs to the WD repeat LIS1/nudF family.</text>
</comment>
<accession>B4P6P9</accession>
<organism>
    <name type="scientific">Drosophila yakuba</name>
    <name type="common">Fruit fly</name>
    <dbReference type="NCBI Taxonomy" id="7245"/>
    <lineage>
        <taxon>Eukaryota</taxon>
        <taxon>Metazoa</taxon>
        <taxon>Ecdysozoa</taxon>
        <taxon>Arthropoda</taxon>
        <taxon>Hexapoda</taxon>
        <taxon>Insecta</taxon>
        <taxon>Pterygota</taxon>
        <taxon>Neoptera</taxon>
        <taxon>Endopterygota</taxon>
        <taxon>Diptera</taxon>
        <taxon>Brachycera</taxon>
        <taxon>Muscomorpha</taxon>
        <taxon>Ephydroidea</taxon>
        <taxon>Drosophilidae</taxon>
        <taxon>Drosophila</taxon>
        <taxon>Sophophora</taxon>
    </lineage>
</organism>
<protein>
    <recommendedName>
        <fullName evidence="1">Lissencephaly-1 homolog</fullName>
    </recommendedName>
</protein>
<gene>
    <name evidence="1" type="primary">Lis-1</name>
    <name type="ORF">GE11762</name>
</gene>
<dbReference type="EMBL" id="CM000158">
    <property type="protein sequence ID" value="EDW91976.1"/>
    <property type="molecule type" value="Genomic_DNA"/>
</dbReference>
<dbReference type="SMR" id="B4P6P9"/>
<dbReference type="EnsemblMetazoa" id="FBtr0258280">
    <property type="protein sequence ID" value="FBpp0256772"/>
    <property type="gene ID" value="FBgn0229556"/>
</dbReference>
<dbReference type="EnsemblMetazoa" id="XM_002092228.3">
    <property type="protein sequence ID" value="XP_002092264.1"/>
    <property type="gene ID" value="LOC6531465"/>
</dbReference>
<dbReference type="GeneID" id="6531465"/>
<dbReference type="KEGG" id="dya:Dyak_GE11762"/>
<dbReference type="CTD" id="36791"/>
<dbReference type="eggNOG" id="KOG0295">
    <property type="taxonomic scope" value="Eukaryota"/>
</dbReference>
<dbReference type="HOGENOM" id="CLU_000288_57_15_1"/>
<dbReference type="OMA" id="WHVATKE"/>
<dbReference type="OrthoDB" id="674604at2759"/>
<dbReference type="PhylomeDB" id="B4P6P9"/>
<dbReference type="Proteomes" id="UP000002282">
    <property type="component" value="Chromosome 2R"/>
</dbReference>
<dbReference type="GO" id="GO:1904115">
    <property type="term" value="C:axon cytoplasm"/>
    <property type="evidence" value="ECO:0007669"/>
    <property type="project" value="GOC"/>
</dbReference>
<dbReference type="GO" id="GO:0005938">
    <property type="term" value="C:cell cortex"/>
    <property type="evidence" value="ECO:0007669"/>
    <property type="project" value="EnsemblMetazoa"/>
</dbReference>
<dbReference type="GO" id="GO:0030425">
    <property type="term" value="C:dendrite"/>
    <property type="evidence" value="ECO:0007669"/>
    <property type="project" value="EnsemblMetazoa"/>
</dbReference>
<dbReference type="GO" id="GO:0005869">
    <property type="term" value="C:dynactin complex"/>
    <property type="evidence" value="ECO:0007669"/>
    <property type="project" value="EnsemblMetazoa"/>
</dbReference>
<dbReference type="GO" id="GO:0030286">
    <property type="term" value="C:dynein complex"/>
    <property type="evidence" value="ECO:0007669"/>
    <property type="project" value="EnsemblMetazoa"/>
</dbReference>
<dbReference type="GO" id="GO:0030426">
    <property type="term" value="C:growth cone"/>
    <property type="evidence" value="ECO:0007669"/>
    <property type="project" value="EnsemblMetazoa"/>
</dbReference>
<dbReference type="GO" id="GO:0000776">
    <property type="term" value="C:kinetochore"/>
    <property type="evidence" value="ECO:0007669"/>
    <property type="project" value="EnsemblMetazoa"/>
</dbReference>
<dbReference type="GO" id="GO:0005828">
    <property type="term" value="C:kinetochore microtubule"/>
    <property type="evidence" value="ECO:0007669"/>
    <property type="project" value="EnsemblMetazoa"/>
</dbReference>
<dbReference type="GO" id="GO:0043025">
    <property type="term" value="C:neuronal cell body"/>
    <property type="evidence" value="ECO:0007669"/>
    <property type="project" value="EnsemblMetazoa"/>
</dbReference>
<dbReference type="GO" id="GO:0031616">
    <property type="term" value="C:spindle pole centrosome"/>
    <property type="evidence" value="ECO:0007669"/>
    <property type="project" value="EnsemblMetazoa"/>
</dbReference>
<dbReference type="GO" id="GO:0070840">
    <property type="term" value="F:dynein complex binding"/>
    <property type="evidence" value="ECO:0007669"/>
    <property type="project" value="UniProtKB-UniRule"/>
</dbReference>
<dbReference type="GO" id="GO:0007298">
    <property type="term" value="P:border follicle cell migration"/>
    <property type="evidence" value="ECO:0007669"/>
    <property type="project" value="EnsemblMetazoa"/>
</dbReference>
<dbReference type="GO" id="GO:0051642">
    <property type="term" value="P:centrosome localization"/>
    <property type="evidence" value="ECO:0007669"/>
    <property type="project" value="EnsemblMetazoa"/>
</dbReference>
<dbReference type="GO" id="GO:0051299">
    <property type="term" value="P:centrosome separation"/>
    <property type="evidence" value="ECO:0007669"/>
    <property type="project" value="EnsemblMetazoa"/>
</dbReference>
<dbReference type="GO" id="GO:0030381">
    <property type="term" value="P:chorion-containing eggshell pattern formation"/>
    <property type="evidence" value="ECO:0007669"/>
    <property type="project" value="EnsemblMetazoa"/>
</dbReference>
<dbReference type="GO" id="GO:0061883">
    <property type="term" value="P:clathrin-dependent endocytosis involved in vitellogenesis"/>
    <property type="evidence" value="ECO:0007669"/>
    <property type="project" value="EnsemblMetazoa"/>
</dbReference>
<dbReference type="GO" id="GO:0048813">
    <property type="term" value="P:dendrite morphogenesis"/>
    <property type="evidence" value="ECO:0007669"/>
    <property type="project" value="EnsemblMetazoa"/>
</dbReference>
<dbReference type="GO" id="GO:0000132">
    <property type="term" value="P:establishment of mitotic spindle orientation"/>
    <property type="evidence" value="ECO:0007669"/>
    <property type="project" value="UniProtKB-UniRule"/>
</dbReference>
<dbReference type="GO" id="GO:0048142">
    <property type="term" value="P:germarium-derived cystoblast division"/>
    <property type="evidence" value="ECO:0007669"/>
    <property type="project" value="EnsemblMetazoa"/>
</dbReference>
<dbReference type="GO" id="GO:0007294">
    <property type="term" value="P:germarium-derived oocyte fate determination"/>
    <property type="evidence" value="ECO:0007669"/>
    <property type="project" value="EnsemblMetazoa"/>
</dbReference>
<dbReference type="GO" id="GO:0008298">
    <property type="term" value="P:intracellular mRNA localization"/>
    <property type="evidence" value="ECO:0007669"/>
    <property type="project" value="EnsemblMetazoa"/>
</dbReference>
<dbReference type="GO" id="GO:0006886">
    <property type="term" value="P:intracellular protein transport"/>
    <property type="evidence" value="ECO:0007669"/>
    <property type="project" value="EnsemblMetazoa"/>
</dbReference>
<dbReference type="GO" id="GO:0051383">
    <property type="term" value="P:kinetochore organization"/>
    <property type="evidence" value="ECO:0007669"/>
    <property type="project" value="EnsemblMetazoa"/>
</dbReference>
<dbReference type="GO" id="GO:0051012">
    <property type="term" value="P:microtubule sliding"/>
    <property type="evidence" value="ECO:0007669"/>
    <property type="project" value="UniProtKB-UniRule"/>
</dbReference>
<dbReference type="GO" id="GO:0046716">
    <property type="term" value="P:muscle cell cellular homeostasis"/>
    <property type="evidence" value="ECO:0007669"/>
    <property type="project" value="EnsemblMetazoa"/>
</dbReference>
<dbReference type="GO" id="GO:0016319">
    <property type="term" value="P:mushroom body development"/>
    <property type="evidence" value="ECO:0007669"/>
    <property type="project" value="EnsemblMetazoa"/>
</dbReference>
<dbReference type="GO" id="GO:0007405">
    <property type="term" value="P:neuroblast proliferation"/>
    <property type="evidence" value="ECO:0007669"/>
    <property type="project" value="EnsemblMetazoa"/>
</dbReference>
<dbReference type="GO" id="GO:0030473">
    <property type="term" value="P:nuclear migration along microtubule"/>
    <property type="evidence" value="ECO:0007669"/>
    <property type="project" value="EnsemblMetazoa"/>
</dbReference>
<dbReference type="GO" id="GO:0007312">
    <property type="term" value="P:oocyte nucleus migration involved in oocyte dorsal/ventral axis specification"/>
    <property type="evidence" value="ECO:0007669"/>
    <property type="project" value="EnsemblMetazoa"/>
</dbReference>
<dbReference type="GO" id="GO:0030723">
    <property type="term" value="P:ovarian fusome organization"/>
    <property type="evidence" value="ECO:0007669"/>
    <property type="project" value="EnsemblMetazoa"/>
</dbReference>
<dbReference type="GO" id="GO:0007300">
    <property type="term" value="P:ovarian nurse cell to oocyte transport"/>
    <property type="evidence" value="ECO:0007669"/>
    <property type="project" value="EnsemblMetazoa"/>
</dbReference>
<dbReference type="GO" id="GO:0072499">
    <property type="term" value="P:photoreceptor cell axon guidance"/>
    <property type="evidence" value="ECO:0007669"/>
    <property type="project" value="EnsemblMetazoa"/>
</dbReference>
<dbReference type="GO" id="GO:0050772">
    <property type="term" value="P:positive regulation of axonogenesis"/>
    <property type="evidence" value="ECO:0007669"/>
    <property type="project" value="EnsemblMetazoa"/>
</dbReference>
<dbReference type="GO" id="GO:0030513">
    <property type="term" value="P:positive regulation of BMP signaling pathway"/>
    <property type="evidence" value="ECO:0007669"/>
    <property type="project" value="EnsemblMetazoa"/>
</dbReference>
<dbReference type="GO" id="GO:0045842">
    <property type="term" value="P:positive regulation of mitotic metaphase/anaphase transition"/>
    <property type="evidence" value="ECO:0007669"/>
    <property type="project" value="EnsemblMetazoa"/>
</dbReference>
<dbReference type="GO" id="GO:0034501">
    <property type="term" value="P:protein localization to kinetochore"/>
    <property type="evidence" value="ECO:0007669"/>
    <property type="project" value="EnsemblMetazoa"/>
</dbReference>
<dbReference type="GO" id="GO:0048814">
    <property type="term" value="P:regulation of dendrite morphogenesis"/>
    <property type="evidence" value="ECO:0007669"/>
    <property type="project" value="EnsemblMetazoa"/>
</dbReference>
<dbReference type="GO" id="GO:0008090">
    <property type="term" value="P:retrograde axonal transport"/>
    <property type="evidence" value="ECO:0007669"/>
    <property type="project" value="EnsemblMetazoa"/>
</dbReference>
<dbReference type="GO" id="GO:0042052">
    <property type="term" value="P:rhabdomere development"/>
    <property type="evidence" value="ECO:0007669"/>
    <property type="project" value="EnsemblMetazoa"/>
</dbReference>
<dbReference type="GO" id="GO:0007283">
    <property type="term" value="P:spermatogenesis"/>
    <property type="evidence" value="ECO:0007669"/>
    <property type="project" value="EnsemblMetazoa"/>
</dbReference>
<dbReference type="GO" id="GO:0051225">
    <property type="term" value="P:spindle assembly"/>
    <property type="evidence" value="ECO:0007669"/>
    <property type="project" value="EnsemblMetazoa"/>
</dbReference>
<dbReference type="GO" id="GO:0019827">
    <property type="term" value="P:stem cell population maintenance"/>
    <property type="evidence" value="ECO:0007669"/>
    <property type="project" value="EnsemblMetazoa"/>
</dbReference>
<dbReference type="CDD" id="cd00200">
    <property type="entry name" value="WD40"/>
    <property type="match status" value="1"/>
</dbReference>
<dbReference type="FunFam" id="2.130.10.10:FF:000038">
    <property type="entry name" value="Lissencephaly-1 homolog B"/>
    <property type="match status" value="1"/>
</dbReference>
<dbReference type="FunFam" id="1.20.960.30:FF:000002">
    <property type="entry name" value="Platelet-activating factor acetylhydrolase ib"/>
    <property type="match status" value="1"/>
</dbReference>
<dbReference type="Gene3D" id="1.20.960.30">
    <property type="match status" value="1"/>
</dbReference>
<dbReference type="Gene3D" id="2.130.10.10">
    <property type="entry name" value="YVTN repeat-like/Quinoprotein amine dehydrogenase"/>
    <property type="match status" value="1"/>
</dbReference>
<dbReference type="HAMAP" id="MF_03141">
    <property type="entry name" value="lis1"/>
    <property type="match status" value="1"/>
</dbReference>
<dbReference type="InterPro" id="IPR017252">
    <property type="entry name" value="Dynein_regulator_LIS1"/>
</dbReference>
<dbReference type="InterPro" id="IPR020472">
    <property type="entry name" value="G-protein_beta_WD-40_rep"/>
</dbReference>
<dbReference type="InterPro" id="IPR037190">
    <property type="entry name" value="LIS1_N"/>
</dbReference>
<dbReference type="InterPro" id="IPR006594">
    <property type="entry name" value="LisH"/>
</dbReference>
<dbReference type="InterPro" id="IPR056795">
    <property type="entry name" value="PAC1-like_LisH-like_dom"/>
</dbReference>
<dbReference type="InterPro" id="IPR015943">
    <property type="entry name" value="WD40/YVTN_repeat-like_dom_sf"/>
</dbReference>
<dbReference type="InterPro" id="IPR019775">
    <property type="entry name" value="WD40_repeat_CS"/>
</dbReference>
<dbReference type="InterPro" id="IPR036322">
    <property type="entry name" value="WD40_repeat_dom_sf"/>
</dbReference>
<dbReference type="InterPro" id="IPR001680">
    <property type="entry name" value="WD40_rpt"/>
</dbReference>
<dbReference type="InterPro" id="IPR050349">
    <property type="entry name" value="WD_LIS1/nudF_dynein_reg"/>
</dbReference>
<dbReference type="PANTHER" id="PTHR44129">
    <property type="entry name" value="WD REPEAT-CONTAINING PROTEIN POP1"/>
    <property type="match status" value="1"/>
</dbReference>
<dbReference type="Pfam" id="PF24951">
    <property type="entry name" value="LisH_PAC1"/>
    <property type="match status" value="1"/>
</dbReference>
<dbReference type="Pfam" id="PF00400">
    <property type="entry name" value="WD40"/>
    <property type="match status" value="7"/>
</dbReference>
<dbReference type="PIRSF" id="PIRSF037647">
    <property type="entry name" value="Dynein_regulator_Lis1"/>
    <property type="match status" value="1"/>
</dbReference>
<dbReference type="PRINTS" id="PR00320">
    <property type="entry name" value="GPROTEINBRPT"/>
</dbReference>
<dbReference type="SMART" id="SM00667">
    <property type="entry name" value="LisH"/>
    <property type="match status" value="1"/>
</dbReference>
<dbReference type="SMART" id="SM00320">
    <property type="entry name" value="WD40"/>
    <property type="match status" value="7"/>
</dbReference>
<dbReference type="SUPFAM" id="SSF109925">
    <property type="entry name" value="Lissencephaly-1 protein (Lis-1, PAF-AH alpha) N-terminal domain"/>
    <property type="match status" value="1"/>
</dbReference>
<dbReference type="SUPFAM" id="SSF50978">
    <property type="entry name" value="WD40 repeat-like"/>
    <property type="match status" value="1"/>
</dbReference>
<dbReference type="PROSITE" id="PS50896">
    <property type="entry name" value="LISH"/>
    <property type="match status" value="1"/>
</dbReference>
<dbReference type="PROSITE" id="PS00678">
    <property type="entry name" value="WD_REPEATS_1"/>
    <property type="match status" value="6"/>
</dbReference>
<dbReference type="PROSITE" id="PS50082">
    <property type="entry name" value="WD_REPEATS_2"/>
    <property type="match status" value="7"/>
</dbReference>
<dbReference type="PROSITE" id="PS50294">
    <property type="entry name" value="WD_REPEATS_REGION"/>
    <property type="match status" value="1"/>
</dbReference>
<proteinExistence type="inferred from homology"/>
<keyword id="KW-0131">Cell cycle</keyword>
<keyword id="KW-0132">Cell division</keyword>
<keyword id="KW-0175">Coiled coil</keyword>
<keyword id="KW-0963">Cytoplasm</keyword>
<keyword id="KW-0206">Cytoskeleton</keyword>
<keyword id="KW-0493">Microtubule</keyword>
<keyword id="KW-0498">Mitosis</keyword>
<keyword id="KW-0677">Repeat</keyword>
<keyword id="KW-0813">Transport</keyword>
<keyword id="KW-0853">WD repeat</keyword>
<name>LIS1_DROYA</name>
<reference key="1">
    <citation type="journal article" date="2007" name="Nature">
        <title>Evolution of genes and genomes on the Drosophila phylogeny.</title>
        <authorList>
            <consortium name="Drosophila 12 genomes consortium"/>
        </authorList>
    </citation>
    <scope>NUCLEOTIDE SEQUENCE [LARGE SCALE GENOMIC DNA]</scope>
    <source>
        <strain>Tai18E2 / Tucson 14021-0261.01</strain>
    </source>
</reference>